<accession>B7MQG2</accession>
<name>COF_ECO81</name>
<organism>
    <name type="scientific">Escherichia coli O81 (strain ED1a)</name>
    <dbReference type="NCBI Taxonomy" id="585397"/>
    <lineage>
        <taxon>Bacteria</taxon>
        <taxon>Pseudomonadati</taxon>
        <taxon>Pseudomonadota</taxon>
        <taxon>Gammaproteobacteria</taxon>
        <taxon>Enterobacterales</taxon>
        <taxon>Enterobacteriaceae</taxon>
        <taxon>Escherichia</taxon>
    </lineage>
</organism>
<reference key="1">
    <citation type="journal article" date="2009" name="PLoS Genet.">
        <title>Organised genome dynamics in the Escherichia coli species results in highly diverse adaptive paths.</title>
        <authorList>
            <person name="Touchon M."/>
            <person name="Hoede C."/>
            <person name="Tenaillon O."/>
            <person name="Barbe V."/>
            <person name="Baeriswyl S."/>
            <person name="Bidet P."/>
            <person name="Bingen E."/>
            <person name="Bonacorsi S."/>
            <person name="Bouchier C."/>
            <person name="Bouvet O."/>
            <person name="Calteau A."/>
            <person name="Chiapello H."/>
            <person name="Clermont O."/>
            <person name="Cruveiller S."/>
            <person name="Danchin A."/>
            <person name="Diard M."/>
            <person name="Dossat C."/>
            <person name="Karoui M.E."/>
            <person name="Frapy E."/>
            <person name="Garry L."/>
            <person name="Ghigo J.M."/>
            <person name="Gilles A.M."/>
            <person name="Johnson J."/>
            <person name="Le Bouguenec C."/>
            <person name="Lescat M."/>
            <person name="Mangenot S."/>
            <person name="Martinez-Jehanne V."/>
            <person name="Matic I."/>
            <person name="Nassif X."/>
            <person name="Oztas S."/>
            <person name="Petit M.A."/>
            <person name="Pichon C."/>
            <person name="Rouy Z."/>
            <person name="Ruf C.S."/>
            <person name="Schneider D."/>
            <person name="Tourret J."/>
            <person name="Vacherie B."/>
            <person name="Vallenet D."/>
            <person name="Medigue C."/>
            <person name="Rocha E.P.C."/>
            <person name="Denamur E."/>
        </authorList>
    </citation>
    <scope>NUCLEOTIDE SEQUENCE [LARGE SCALE GENOMIC DNA]</scope>
    <source>
        <strain>ED1a</strain>
    </source>
</reference>
<dbReference type="EC" id="3.6.1.-" evidence="1"/>
<dbReference type="EMBL" id="CU928162">
    <property type="protein sequence ID" value="CAR06680.1"/>
    <property type="molecule type" value="Genomic_DNA"/>
</dbReference>
<dbReference type="RefSeq" id="WP_012601350.1">
    <property type="nucleotide sequence ID" value="NC_011745.1"/>
</dbReference>
<dbReference type="SMR" id="B7MQG2"/>
<dbReference type="KEGG" id="ecq:ECED1_0470"/>
<dbReference type="HOGENOM" id="CLU_044146_5_2_6"/>
<dbReference type="Proteomes" id="UP000000748">
    <property type="component" value="Chromosome"/>
</dbReference>
<dbReference type="GO" id="GO:0002145">
    <property type="term" value="F:4-amino-5-hydroxymethyl-2-methylpyrimidine diphosphatase activity"/>
    <property type="evidence" value="ECO:0007669"/>
    <property type="project" value="RHEA"/>
</dbReference>
<dbReference type="GO" id="GO:0000287">
    <property type="term" value="F:magnesium ion binding"/>
    <property type="evidence" value="ECO:0000250"/>
    <property type="project" value="UniProtKB"/>
</dbReference>
<dbReference type="GO" id="GO:0016791">
    <property type="term" value="F:phosphatase activity"/>
    <property type="evidence" value="ECO:0000250"/>
    <property type="project" value="UniProtKB"/>
</dbReference>
<dbReference type="CDD" id="cd07516">
    <property type="entry name" value="HAD_Pase"/>
    <property type="match status" value="1"/>
</dbReference>
<dbReference type="FunFam" id="3.30.1240.10:FF:000002">
    <property type="entry name" value="HMP-PP phosphatase"/>
    <property type="match status" value="1"/>
</dbReference>
<dbReference type="Gene3D" id="3.30.1240.10">
    <property type="match status" value="1"/>
</dbReference>
<dbReference type="Gene3D" id="3.40.50.1000">
    <property type="entry name" value="HAD superfamily/HAD-like"/>
    <property type="match status" value="1"/>
</dbReference>
<dbReference type="HAMAP" id="MF_01847">
    <property type="entry name" value="HMP_PP_phosphat"/>
    <property type="match status" value="1"/>
</dbReference>
<dbReference type="InterPro" id="IPR000150">
    <property type="entry name" value="Cof"/>
</dbReference>
<dbReference type="InterPro" id="IPR036412">
    <property type="entry name" value="HAD-like_sf"/>
</dbReference>
<dbReference type="InterPro" id="IPR006379">
    <property type="entry name" value="HAD-SF_hydro_IIB"/>
</dbReference>
<dbReference type="InterPro" id="IPR023214">
    <property type="entry name" value="HAD_sf"/>
</dbReference>
<dbReference type="InterPro" id="IPR023938">
    <property type="entry name" value="HMP-PP_phosphatase"/>
</dbReference>
<dbReference type="NCBIfam" id="TIGR00099">
    <property type="entry name" value="Cof-subfamily"/>
    <property type="match status" value="1"/>
</dbReference>
<dbReference type="NCBIfam" id="TIGR01484">
    <property type="entry name" value="HAD-SF-IIB"/>
    <property type="match status" value="1"/>
</dbReference>
<dbReference type="NCBIfam" id="NF011705">
    <property type="entry name" value="PRK15126.1"/>
    <property type="match status" value="1"/>
</dbReference>
<dbReference type="PANTHER" id="PTHR47267">
    <property type="match status" value="1"/>
</dbReference>
<dbReference type="PANTHER" id="PTHR47267:SF2">
    <property type="entry name" value="HMP-PP PHOSPHATASE"/>
    <property type="match status" value="1"/>
</dbReference>
<dbReference type="Pfam" id="PF08282">
    <property type="entry name" value="Hydrolase_3"/>
    <property type="match status" value="1"/>
</dbReference>
<dbReference type="SFLD" id="SFLDG01140">
    <property type="entry name" value="C2.B:_Phosphomannomutase_and_P"/>
    <property type="match status" value="1"/>
</dbReference>
<dbReference type="SFLD" id="SFLDS00003">
    <property type="entry name" value="Haloacid_Dehalogenase"/>
    <property type="match status" value="1"/>
</dbReference>
<dbReference type="SUPFAM" id="SSF56784">
    <property type="entry name" value="HAD-like"/>
    <property type="match status" value="1"/>
</dbReference>
<dbReference type="PROSITE" id="PS01228">
    <property type="entry name" value="COF_1"/>
    <property type="match status" value="1"/>
</dbReference>
<dbReference type="PROSITE" id="PS01229">
    <property type="entry name" value="COF_2"/>
    <property type="match status" value="1"/>
</dbReference>
<gene>
    <name evidence="1" type="primary">cof</name>
    <name type="ordered locus">ECED1_0470</name>
</gene>
<keyword id="KW-0378">Hydrolase</keyword>
<keyword id="KW-0460">Magnesium</keyword>
<keyword id="KW-0479">Metal-binding</keyword>
<evidence type="ECO:0000255" key="1">
    <source>
        <dbReference type="HAMAP-Rule" id="MF_01847"/>
    </source>
</evidence>
<sequence length="272" mass="30358">MARLAAFDMDGTLLMPDHHLGEKTLSTLARLRERDITLTFATGRHALEMQHILGALSLDAYLITGNGTRVHSLEGELLHRDDLPADVAELVLYQQWDTRASMHIFNDDGWFTGKENPALLQAFVYSGFRYQIIDVKKMPLGSVTKICFCGDHDDLTRLQIQLYEALGERAHLCFSATDCLEVLPVGCNKGAVLTVLTQHLGLSLRDCMAFGDAMNDREMLGSVGSGFIMGNAMPQLRAELPHLPVIGHCRNQAVSHYLTHWLDYPHLPYSPE</sequence>
<comment type="function">
    <text evidence="1">Catalyzes the hydrolysis of 4-amino-2-methyl-5-hydroxymethylpyrimidine pyrophosphate (HMP-PP) to 4-amino-2-methyl-5-hydroxymethylpyrimidine phosphate (HMP-P).</text>
</comment>
<comment type="catalytic activity">
    <reaction evidence="1">
        <text>4-amino-2-methyl-5-(diphosphooxymethyl)pyrimidine + H2O = 4-amino-2-methyl-5-(phosphooxymethyl)pyrimidine + phosphate + H(+)</text>
        <dbReference type="Rhea" id="RHEA:27914"/>
        <dbReference type="ChEBI" id="CHEBI:15377"/>
        <dbReference type="ChEBI" id="CHEBI:15378"/>
        <dbReference type="ChEBI" id="CHEBI:43474"/>
        <dbReference type="ChEBI" id="CHEBI:57841"/>
        <dbReference type="ChEBI" id="CHEBI:58354"/>
    </reaction>
</comment>
<comment type="cofactor">
    <cofactor evidence="1">
        <name>Mg(2+)</name>
        <dbReference type="ChEBI" id="CHEBI:18420"/>
    </cofactor>
</comment>
<comment type="similarity">
    <text evidence="1">Belongs to the HAD-like hydrolase superfamily. Cof family.</text>
</comment>
<feature type="chain" id="PRO_1000188500" description="HMP-PP phosphatase">
    <location>
        <begin position="1"/>
        <end position="272"/>
    </location>
</feature>
<feature type="active site" description="Nucleophile" evidence="1">
    <location>
        <position position="8"/>
    </location>
</feature>
<feature type="binding site" evidence="1">
    <location>
        <position position="8"/>
    </location>
    <ligand>
        <name>Mg(2+)</name>
        <dbReference type="ChEBI" id="CHEBI:18420"/>
    </ligand>
</feature>
<feature type="binding site" evidence="1">
    <location>
        <position position="10"/>
    </location>
    <ligand>
        <name>Mg(2+)</name>
        <dbReference type="ChEBI" id="CHEBI:18420"/>
    </ligand>
</feature>
<feature type="binding site" evidence="1">
    <location>
        <position position="212"/>
    </location>
    <ligand>
        <name>Mg(2+)</name>
        <dbReference type="ChEBI" id="CHEBI:18420"/>
    </ligand>
</feature>
<proteinExistence type="inferred from homology"/>
<protein>
    <recommendedName>
        <fullName evidence="1">HMP-PP phosphatase</fullName>
        <ecNumber evidence="1">3.6.1.-</ecNumber>
    </recommendedName>
</protein>